<reference key="1">
    <citation type="journal article" date="2003" name="J. Biol. Chem.">
        <title>Molecular cloning and characterization of CYP719, a methylenedioxy bridge-forming enzyme that belongs to a novel P450 family, from cultured Coptis japonica cells.</title>
        <authorList>
            <person name="Ikezawa N."/>
            <person name="Tanaka M."/>
            <person name="Nagayoshi M."/>
            <person name="Shinkyo R."/>
            <person name="Sakaki T."/>
            <person name="Inouye K."/>
            <person name="Sato F."/>
        </authorList>
    </citation>
    <scope>NUCLEOTIDE SEQUENCE [MRNA]</scope>
    <scope>TISSUE SPECIFICITY</scope>
</reference>
<keyword id="KW-0256">Endoplasmic reticulum</keyword>
<keyword id="KW-0349">Heme</keyword>
<keyword id="KW-0408">Iron</keyword>
<keyword id="KW-0472">Membrane</keyword>
<keyword id="KW-0479">Metal-binding</keyword>
<keyword id="KW-0492">Microsome</keyword>
<keyword id="KW-0503">Monooxygenase</keyword>
<keyword id="KW-0560">Oxidoreductase</keyword>
<keyword id="KW-0812">Transmembrane</keyword>
<keyword id="KW-1133">Transmembrane helix</keyword>
<organism>
    <name type="scientific">Coptis japonica</name>
    <name type="common">Japanese goldthread</name>
    <dbReference type="NCBI Taxonomy" id="3442"/>
    <lineage>
        <taxon>Eukaryota</taxon>
        <taxon>Viridiplantae</taxon>
        <taxon>Streptophyta</taxon>
        <taxon>Embryophyta</taxon>
        <taxon>Tracheophyta</taxon>
        <taxon>Spermatophyta</taxon>
        <taxon>Magnoliopsida</taxon>
        <taxon>Ranunculales</taxon>
        <taxon>Ranunculaceae</taxon>
        <taxon>Coptidoideae</taxon>
        <taxon>Coptis</taxon>
    </lineage>
</organism>
<proteinExistence type="evidence at transcript level"/>
<dbReference type="EC" id="1.14.14.102" evidence="2"/>
<dbReference type="EMBL" id="AB025030">
    <property type="protein sequence ID" value="BAB12433.1"/>
    <property type="molecule type" value="mRNA"/>
</dbReference>
<dbReference type="SMR" id="Q9FXW4"/>
<dbReference type="UniPathway" id="UPA00306">
    <property type="reaction ID" value="UER00443"/>
</dbReference>
<dbReference type="GO" id="GO:0005789">
    <property type="term" value="C:endoplasmic reticulum membrane"/>
    <property type="evidence" value="ECO:0007669"/>
    <property type="project" value="UniProtKB-SubCell"/>
</dbReference>
<dbReference type="GO" id="GO:0020037">
    <property type="term" value="F:heme binding"/>
    <property type="evidence" value="ECO:0007669"/>
    <property type="project" value="InterPro"/>
</dbReference>
<dbReference type="GO" id="GO:0005506">
    <property type="term" value="F:iron ion binding"/>
    <property type="evidence" value="ECO:0007669"/>
    <property type="project" value="InterPro"/>
</dbReference>
<dbReference type="GO" id="GO:0050593">
    <property type="term" value="F:N-methylcoclaurine 3'-monooxygenase activity"/>
    <property type="evidence" value="ECO:0007669"/>
    <property type="project" value="UniProtKB-EC"/>
</dbReference>
<dbReference type="GO" id="GO:0044550">
    <property type="term" value="P:secondary metabolite biosynthetic process"/>
    <property type="evidence" value="ECO:0007669"/>
    <property type="project" value="UniProtKB-ARBA"/>
</dbReference>
<dbReference type="CDD" id="cd11073">
    <property type="entry name" value="CYP76-like"/>
    <property type="match status" value="1"/>
</dbReference>
<dbReference type="FunFam" id="1.10.630.10:FF:000126">
    <property type="entry name" value="Predicted protein"/>
    <property type="match status" value="1"/>
</dbReference>
<dbReference type="Gene3D" id="1.10.630.10">
    <property type="entry name" value="Cytochrome P450"/>
    <property type="match status" value="1"/>
</dbReference>
<dbReference type="InterPro" id="IPR001128">
    <property type="entry name" value="Cyt_P450"/>
</dbReference>
<dbReference type="InterPro" id="IPR017972">
    <property type="entry name" value="Cyt_P450_CS"/>
</dbReference>
<dbReference type="InterPro" id="IPR002401">
    <property type="entry name" value="Cyt_P450_E_grp-I"/>
</dbReference>
<dbReference type="InterPro" id="IPR036396">
    <property type="entry name" value="Cyt_P450_sf"/>
</dbReference>
<dbReference type="PANTHER" id="PTHR47950:SF49">
    <property type="entry name" value="CYTOCHROME P450"/>
    <property type="match status" value="1"/>
</dbReference>
<dbReference type="PANTHER" id="PTHR47950">
    <property type="entry name" value="CYTOCHROME P450, FAMILY 76, SUBFAMILY C, POLYPEPTIDE 5-RELATED"/>
    <property type="match status" value="1"/>
</dbReference>
<dbReference type="Pfam" id="PF00067">
    <property type="entry name" value="p450"/>
    <property type="match status" value="1"/>
</dbReference>
<dbReference type="PRINTS" id="PR00463">
    <property type="entry name" value="EP450I"/>
</dbReference>
<dbReference type="PRINTS" id="PR00385">
    <property type="entry name" value="P450"/>
</dbReference>
<dbReference type="SUPFAM" id="SSF48264">
    <property type="entry name" value="Cytochrome P450"/>
    <property type="match status" value="1"/>
</dbReference>
<dbReference type="PROSITE" id="PS00086">
    <property type="entry name" value="CYTOCHROME_P450"/>
    <property type="match status" value="1"/>
</dbReference>
<feature type="chain" id="PRO_0000395197" description="Probable (S)-N-methylcoclaurine 3'-hydroxylase isozyme 2">
    <location>
        <begin position="1"/>
        <end position="488"/>
    </location>
</feature>
<feature type="transmembrane region" description="Helical" evidence="3">
    <location>
        <begin position="2"/>
        <end position="21"/>
    </location>
</feature>
<feature type="binding site" description="axial binding residue" evidence="1">
    <location>
        <position position="427"/>
    </location>
    <ligand>
        <name>heme</name>
        <dbReference type="ChEBI" id="CHEBI:30413"/>
    </ligand>
    <ligandPart>
        <name>Fe</name>
        <dbReference type="ChEBI" id="CHEBI:18248"/>
    </ligandPart>
</feature>
<evidence type="ECO:0000250" key="1"/>
<evidence type="ECO:0000250" key="2">
    <source>
        <dbReference type="UniProtKB" id="O64899"/>
    </source>
</evidence>
<evidence type="ECO:0000255" key="3"/>
<evidence type="ECO:0000269" key="4">
    <source>
    </source>
</evidence>
<evidence type="ECO:0000305" key="5"/>
<name>C80B2_COPJA</name>
<gene>
    <name type="primary">CYP80B2</name>
</gene>
<sequence>MEVLSIAIVSFSFLLFLFFILRDSRPKNLPPGPRPSPIVGNLLQLGDKPHAEFAKLAQKYGELFSLKLGSQTVVVASSPAAAAEILKTHDKILSGRYVFQSFRVKEHVENSIVWSECNDNWKLLRKVCRTELFTPKMIESQSEIREAKAREMVKFLRGKEGEVVKIVEVVFGTLVNIFGNLIFSKDVFDLEDPTGGSVELKEHLWKLLDMGNSTNPADYFPIMGKLDLFGQRRAVAEVLQQIYDVWGVMLKERRGTKGSESKNDFVDVLLNAGLDDQKINALLMELFGAGTETSASTIEWAITELTKKPLVVSKIRLELVNVVGDNTVKESDLPHLPYLQAFVKETLRLHPPTPLLLPRRALETCTVMNYTIPKECQIMVNAWAIGRDPKTWDDPLNFKPERFLSSDVDYKGNDFELIPFGGGRRICPGLPLASQFSNLIVATLVQNFEWSLPQGMSTSELSMDEKFGLTLQKDPPLLIVLKARASNI</sequence>
<protein>
    <recommendedName>
        <fullName>Probable (S)-N-methylcoclaurine 3'-hydroxylase isozyme 2</fullName>
        <ecNumber evidence="2">1.14.14.102</ecNumber>
    </recommendedName>
    <alternativeName>
        <fullName>Cytochrome P450 80B2</fullName>
    </alternativeName>
</protein>
<comment type="function">
    <text>3'-hydroxylation of (S)-N-methylcoclaurine.</text>
</comment>
<comment type="catalytic activity">
    <reaction evidence="2">
        <text>(S)-N-methylcoclaurine + reduced [NADPH--hemoprotein reductase] + O2 = (S)-3'-hydroxy-N-methylcoclaurine + oxidized [NADPH--hemoprotein reductase] + H2O + H(+)</text>
        <dbReference type="Rhea" id="RHEA:16649"/>
        <dbReference type="Rhea" id="RHEA-COMP:11964"/>
        <dbReference type="Rhea" id="RHEA-COMP:11965"/>
        <dbReference type="ChEBI" id="CHEBI:15377"/>
        <dbReference type="ChEBI" id="CHEBI:15378"/>
        <dbReference type="ChEBI" id="CHEBI:15379"/>
        <dbReference type="ChEBI" id="CHEBI:57618"/>
        <dbReference type="ChEBI" id="CHEBI:57993"/>
        <dbReference type="ChEBI" id="CHEBI:58010"/>
        <dbReference type="ChEBI" id="CHEBI:58210"/>
        <dbReference type="EC" id="1.14.14.102"/>
    </reaction>
</comment>
<comment type="cofactor">
    <cofactor evidence="1">
        <name>heme</name>
        <dbReference type="ChEBI" id="CHEBI:30413"/>
    </cofactor>
</comment>
<comment type="pathway">
    <text>Alkaloid biosynthesis; (S)-reticuline biosynthesis; (S)-reticuline from (S)-norcoclaurine: step 3/4.</text>
</comment>
<comment type="subcellular location">
    <subcellularLocation>
        <location evidence="5">Endoplasmic reticulum membrane</location>
        <topology evidence="5">Single-pass membrane protein</topology>
    </subcellularLocation>
    <subcellularLocation>
        <location evidence="5">Microsome membrane</location>
        <topology evidence="5">Single-pass membrane protein</topology>
    </subcellularLocation>
</comment>
<comment type="tissue specificity">
    <text evidence="4">Expressed at low levels in roots.</text>
</comment>
<comment type="similarity">
    <text evidence="5">Belongs to the cytochrome P450 family.</text>
</comment>
<accession>Q9FXW4</accession>